<comment type="function">
    <text evidence="1">Involved in the second step of GPI biosynthesis. De-N-acetylation of N-acetylglucosaminyl-phosphatidylinositol (By similarity).</text>
</comment>
<comment type="catalytic activity">
    <reaction>
        <text>a 6-(N-acetyl-alpha-D-glucosaminyl)-1-(1,2-diacyl-sn-glycero-3-phospho)-1D-myo-inositol + H2O = a 6-(alpha-D-glucosaminyl)-1-(1,2-diacyl-sn-glycero-3-phospho)-1D-myo-inositol + acetate</text>
        <dbReference type="Rhea" id="RHEA:11660"/>
        <dbReference type="ChEBI" id="CHEBI:15377"/>
        <dbReference type="ChEBI" id="CHEBI:30089"/>
        <dbReference type="ChEBI" id="CHEBI:57265"/>
        <dbReference type="ChEBI" id="CHEBI:57997"/>
        <dbReference type="EC" id="3.5.1.89"/>
    </reaction>
</comment>
<comment type="pathway">
    <text>Glycolipid biosynthesis; glycosylphosphatidylinositol-anchor biosynthesis.</text>
</comment>
<comment type="subcellular location">
    <subcellularLocation>
        <location evidence="1">Endoplasmic reticulum membrane</location>
    </subcellularLocation>
</comment>
<comment type="similarity">
    <text evidence="3">Belongs to the PIGL family.</text>
</comment>
<proteinExistence type="inferred from homology"/>
<protein>
    <recommendedName>
        <fullName>Probable N-acetylglucosaminyl-phosphatidylinositol de-N-acetylase</fullName>
        <ecNumber>3.5.1.89</ecNumber>
    </recommendedName>
    <alternativeName>
        <fullName>Phosphatidylinositol-glycan biosynthesis class L protein</fullName>
        <shortName>PIG-L</shortName>
    </alternativeName>
</protein>
<accession>Q54C64</accession>
<dbReference type="EC" id="3.5.1.89"/>
<dbReference type="EMBL" id="AAFI02000199">
    <property type="protein sequence ID" value="EAL60920.1"/>
    <property type="molecule type" value="Genomic_DNA"/>
</dbReference>
<dbReference type="RefSeq" id="XP_629355.1">
    <property type="nucleotide sequence ID" value="XM_629353.1"/>
</dbReference>
<dbReference type="SMR" id="Q54C64"/>
<dbReference type="FunCoup" id="Q54C64">
    <property type="interactions" value="592"/>
</dbReference>
<dbReference type="STRING" id="44689.Q54C64"/>
<dbReference type="PaxDb" id="44689-DDB0235227"/>
<dbReference type="EnsemblProtists" id="EAL60920">
    <property type="protein sequence ID" value="EAL60920"/>
    <property type="gene ID" value="DDB_G0293136"/>
</dbReference>
<dbReference type="GeneID" id="8629079"/>
<dbReference type="KEGG" id="ddi:DDB_G0293136"/>
<dbReference type="dictyBase" id="DDB_G0293136">
    <property type="gene designation" value="pigL"/>
</dbReference>
<dbReference type="VEuPathDB" id="AmoebaDB:DDB_G0293136"/>
<dbReference type="eggNOG" id="KOG3332">
    <property type="taxonomic scope" value="Eukaryota"/>
</dbReference>
<dbReference type="HOGENOM" id="CLU_034979_1_0_1"/>
<dbReference type="InParanoid" id="Q54C64"/>
<dbReference type="OMA" id="YVLESVN"/>
<dbReference type="PhylomeDB" id="Q54C64"/>
<dbReference type="Reactome" id="R-DDI-162710">
    <property type="pathway name" value="Synthesis of glycosylphosphatidylinositol (GPI)"/>
</dbReference>
<dbReference type="UniPathway" id="UPA00196"/>
<dbReference type="PRO" id="PR:Q54C64"/>
<dbReference type="Proteomes" id="UP000002195">
    <property type="component" value="Chromosome 6"/>
</dbReference>
<dbReference type="GO" id="GO:0005783">
    <property type="term" value="C:endoplasmic reticulum"/>
    <property type="evidence" value="ECO:0000318"/>
    <property type="project" value="GO_Central"/>
</dbReference>
<dbReference type="GO" id="GO:0005789">
    <property type="term" value="C:endoplasmic reticulum membrane"/>
    <property type="evidence" value="ECO:0000250"/>
    <property type="project" value="UniProtKB"/>
</dbReference>
<dbReference type="GO" id="GO:0000225">
    <property type="term" value="F:N-acetylglucosaminylphosphatidylinositol deacetylase activity"/>
    <property type="evidence" value="ECO:0000250"/>
    <property type="project" value="UniProtKB"/>
</dbReference>
<dbReference type="GO" id="GO:0006506">
    <property type="term" value="P:GPI anchor biosynthetic process"/>
    <property type="evidence" value="ECO:0007669"/>
    <property type="project" value="UniProtKB-UniPathway"/>
</dbReference>
<dbReference type="Gene3D" id="3.40.50.10320">
    <property type="entry name" value="LmbE-like"/>
    <property type="match status" value="1"/>
</dbReference>
<dbReference type="InterPro" id="IPR003737">
    <property type="entry name" value="GlcNAc_PI_deacetylase-related"/>
</dbReference>
<dbReference type="InterPro" id="IPR024078">
    <property type="entry name" value="LmbE-like_dom_sf"/>
</dbReference>
<dbReference type="PANTHER" id="PTHR12993:SF11">
    <property type="entry name" value="N-ACETYLGLUCOSAMINYL-PHOSPHATIDYLINOSITOL DE-N-ACETYLASE"/>
    <property type="match status" value="1"/>
</dbReference>
<dbReference type="PANTHER" id="PTHR12993">
    <property type="entry name" value="N-ACETYLGLUCOSAMINYL-PHOSPHATIDYLINOSITOL DE-N-ACETYLASE-RELATED"/>
    <property type="match status" value="1"/>
</dbReference>
<dbReference type="Pfam" id="PF02585">
    <property type="entry name" value="PIG-L"/>
    <property type="match status" value="1"/>
</dbReference>
<dbReference type="SUPFAM" id="SSF102588">
    <property type="entry name" value="LmbE-like"/>
    <property type="match status" value="1"/>
</dbReference>
<evidence type="ECO:0000250" key="1"/>
<evidence type="ECO:0000256" key="2">
    <source>
        <dbReference type="SAM" id="MobiDB-lite"/>
    </source>
</evidence>
<evidence type="ECO:0000305" key="3"/>
<organism>
    <name type="scientific">Dictyostelium discoideum</name>
    <name type="common">Social amoeba</name>
    <dbReference type="NCBI Taxonomy" id="44689"/>
    <lineage>
        <taxon>Eukaryota</taxon>
        <taxon>Amoebozoa</taxon>
        <taxon>Evosea</taxon>
        <taxon>Eumycetozoa</taxon>
        <taxon>Dictyostelia</taxon>
        <taxon>Dictyosteliales</taxon>
        <taxon>Dictyosteliaceae</taxon>
        <taxon>Dictyostelium</taxon>
    </lineage>
</organism>
<feature type="chain" id="PRO_0000328582" description="Probable N-acetylglucosaminyl-phosphatidylinositol de-N-acetylase">
    <location>
        <begin position="1"/>
        <end position="258"/>
    </location>
</feature>
<feature type="region of interest" description="Disordered" evidence="2">
    <location>
        <begin position="147"/>
        <end position="170"/>
    </location>
</feature>
<feature type="compositionally biased region" description="Low complexity" evidence="2">
    <location>
        <begin position="148"/>
        <end position="170"/>
    </location>
</feature>
<keyword id="KW-0256">Endoplasmic reticulum</keyword>
<keyword id="KW-0337">GPI-anchor biosynthesis</keyword>
<keyword id="KW-0378">Hydrolase</keyword>
<keyword id="KW-0472">Membrane</keyword>
<keyword id="KW-1185">Reference proteome</keyword>
<name>PIGL_DICDI</name>
<sequence>MKNHLNNNEDNSTLIKKKVLFVIAHPDDECMFFTPTIQHYNFIGSEIFVACLSNGNAVGLGKIREKELIDSCIDMGINQENVFFDQTNNFQDGMNIIWDTDLVEKTILSFIKQTSADIVISFDECGISSHPNHISISNGLKQLMKNKSSSTTTTSTTSSSSSSSSLSNRTTNNLNKEIKAYKLETVNIIRKYIGIADIPLTKLLSYDENSTQTFISTQLFPPSSYSPMTKHKSQFVWFRYLFVFLSRYSFINTLIEIK</sequence>
<reference key="1">
    <citation type="journal article" date="2005" name="Nature">
        <title>The genome of the social amoeba Dictyostelium discoideum.</title>
        <authorList>
            <person name="Eichinger L."/>
            <person name="Pachebat J.A."/>
            <person name="Gloeckner G."/>
            <person name="Rajandream M.A."/>
            <person name="Sucgang R."/>
            <person name="Berriman M."/>
            <person name="Song J."/>
            <person name="Olsen R."/>
            <person name="Szafranski K."/>
            <person name="Xu Q."/>
            <person name="Tunggal B."/>
            <person name="Kummerfeld S."/>
            <person name="Madera M."/>
            <person name="Konfortov B.A."/>
            <person name="Rivero F."/>
            <person name="Bankier A.T."/>
            <person name="Lehmann R."/>
            <person name="Hamlin N."/>
            <person name="Davies R."/>
            <person name="Gaudet P."/>
            <person name="Fey P."/>
            <person name="Pilcher K."/>
            <person name="Chen G."/>
            <person name="Saunders D."/>
            <person name="Sodergren E.J."/>
            <person name="Davis P."/>
            <person name="Kerhornou A."/>
            <person name="Nie X."/>
            <person name="Hall N."/>
            <person name="Anjard C."/>
            <person name="Hemphill L."/>
            <person name="Bason N."/>
            <person name="Farbrother P."/>
            <person name="Desany B."/>
            <person name="Just E."/>
            <person name="Morio T."/>
            <person name="Rost R."/>
            <person name="Churcher C.M."/>
            <person name="Cooper J."/>
            <person name="Haydock S."/>
            <person name="van Driessche N."/>
            <person name="Cronin A."/>
            <person name="Goodhead I."/>
            <person name="Muzny D.M."/>
            <person name="Mourier T."/>
            <person name="Pain A."/>
            <person name="Lu M."/>
            <person name="Harper D."/>
            <person name="Lindsay R."/>
            <person name="Hauser H."/>
            <person name="James K.D."/>
            <person name="Quiles M."/>
            <person name="Madan Babu M."/>
            <person name="Saito T."/>
            <person name="Buchrieser C."/>
            <person name="Wardroper A."/>
            <person name="Felder M."/>
            <person name="Thangavelu M."/>
            <person name="Johnson D."/>
            <person name="Knights A."/>
            <person name="Loulseged H."/>
            <person name="Mungall K.L."/>
            <person name="Oliver K."/>
            <person name="Price C."/>
            <person name="Quail M.A."/>
            <person name="Urushihara H."/>
            <person name="Hernandez J."/>
            <person name="Rabbinowitsch E."/>
            <person name="Steffen D."/>
            <person name="Sanders M."/>
            <person name="Ma J."/>
            <person name="Kohara Y."/>
            <person name="Sharp S."/>
            <person name="Simmonds M.N."/>
            <person name="Spiegler S."/>
            <person name="Tivey A."/>
            <person name="Sugano S."/>
            <person name="White B."/>
            <person name="Walker D."/>
            <person name="Woodward J.R."/>
            <person name="Winckler T."/>
            <person name="Tanaka Y."/>
            <person name="Shaulsky G."/>
            <person name="Schleicher M."/>
            <person name="Weinstock G.M."/>
            <person name="Rosenthal A."/>
            <person name="Cox E.C."/>
            <person name="Chisholm R.L."/>
            <person name="Gibbs R.A."/>
            <person name="Loomis W.F."/>
            <person name="Platzer M."/>
            <person name="Kay R.R."/>
            <person name="Williams J.G."/>
            <person name="Dear P.H."/>
            <person name="Noegel A.A."/>
            <person name="Barrell B.G."/>
            <person name="Kuspa A."/>
        </authorList>
    </citation>
    <scope>NUCLEOTIDE SEQUENCE [LARGE SCALE GENOMIC DNA]</scope>
    <source>
        <strain>AX4</strain>
    </source>
</reference>
<gene>
    <name type="primary">pigl</name>
    <name type="ORF">DDB_G0293136</name>
</gene>